<proteinExistence type="inferred from homology"/>
<evidence type="ECO:0000255" key="1">
    <source>
        <dbReference type="HAMAP-Rule" id="MF_01302"/>
    </source>
</evidence>
<evidence type="ECO:0000305" key="2"/>
<reference key="1">
    <citation type="journal article" date="2002" name="J. Mol. Microbiol. Biotechnol.">
        <title>The genome of Methanosarcina mazei: evidence for lateral gene transfer between Bacteria and Archaea.</title>
        <authorList>
            <person name="Deppenmeier U."/>
            <person name="Johann A."/>
            <person name="Hartsch T."/>
            <person name="Merkl R."/>
            <person name="Schmitz R.A."/>
            <person name="Martinez-Arias R."/>
            <person name="Henne A."/>
            <person name="Wiezer A."/>
            <person name="Baeumer S."/>
            <person name="Jacobi C."/>
            <person name="Brueggemann H."/>
            <person name="Lienard T."/>
            <person name="Christmann A."/>
            <person name="Boemecke M."/>
            <person name="Steckel S."/>
            <person name="Bhattacharyya A."/>
            <person name="Lykidis A."/>
            <person name="Overbeek R."/>
            <person name="Klenk H.-P."/>
            <person name="Gunsalus R.P."/>
            <person name="Fritz H.-J."/>
            <person name="Gottschalk G."/>
        </authorList>
    </citation>
    <scope>NUCLEOTIDE SEQUENCE [LARGE SCALE GENOMIC DNA]</scope>
    <source>
        <strain>ATCC BAA-159 / DSM 3647 / Goe1 / Go1 / JCM 11833 / OCM 88</strain>
    </source>
</reference>
<dbReference type="EMBL" id="AE008384">
    <property type="protein sequence ID" value="AAM31835.1"/>
    <property type="molecule type" value="Genomic_DNA"/>
</dbReference>
<dbReference type="RefSeq" id="WP_011034070.1">
    <property type="nucleotide sequence ID" value="NC_003901.1"/>
</dbReference>
<dbReference type="SMR" id="Q8PV35"/>
<dbReference type="KEGG" id="mma:MM_2139"/>
<dbReference type="PATRIC" id="fig|192952.21.peg.2453"/>
<dbReference type="eggNOG" id="arCOG04091">
    <property type="taxonomic scope" value="Archaea"/>
</dbReference>
<dbReference type="HOGENOM" id="CLU_098428_1_1_2"/>
<dbReference type="Proteomes" id="UP000000595">
    <property type="component" value="Chromosome"/>
</dbReference>
<dbReference type="GO" id="GO:1990904">
    <property type="term" value="C:ribonucleoprotein complex"/>
    <property type="evidence" value="ECO:0007669"/>
    <property type="project" value="UniProtKB-KW"/>
</dbReference>
<dbReference type="GO" id="GO:0005840">
    <property type="term" value="C:ribosome"/>
    <property type="evidence" value="ECO:0007669"/>
    <property type="project" value="UniProtKB-KW"/>
</dbReference>
<dbReference type="GO" id="GO:0019843">
    <property type="term" value="F:rRNA binding"/>
    <property type="evidence" value="ECO:0007669"/>
    <property type="project" value="UniProtKB-UniRule"/>
</dbReference>
<dbReference type="GO" id="GO:0003735">
    <property type="term" value="F:structural constituent of ribosome"/>
    <property type="evidence" value="ECO:0007669"/>
    <property type="project" value="InterPro"/>
</dbReference>
<dbReference type="GO" id="GO:0006412">
    <property type="term" value="P:translation"/>
    <property type="evidence" value="ECO:0007669"/>
    <property type="project" value="UniProtKB-UniRule"/>
</dbReference>
<dbReference type="FunFam" id="3.30.1370.30:FF:000001">
    <property type="entry name" value="40S ribosomal protein S15a"/>
    <property type="match status" value="1"/>
</dbReference>
<dbReference type="FunFam" id="3.30.1490.10:FF:000002">
    <property type="entry name" value="40S ribosomal protein S15a"/>
    <property type="match status" value="1"/>
</dbReference>
<dbReference type="Gene3D" id="3.30.1370.30">
    <property type="match status" value="1"/>
</dbReference>
<dbReference type="Gene3D" id="3.30.1490.10">
    <property type="match status" value="1"/>
</dbReference>
<dbReference type="HAMAP" id="MF_01302_A">
    <property type="entry name" value="Ribosomal_uS8_A"/>
    <property type="match status" value="1"/>
</dbReference>
<dbReference type="InterPro" id="IPR000630">
    <property type="entry name" value="Ribosomal_uS8"/>
</dbReference>
<dbReference type="InterPro" id="IPR047863">
    <property type="entry name" value="Ribosomal_uS8_CS"/>
</dbReference>
<dbReference type="InterPro" id="IPR035987">
    <property type="entry name" value="Ribosomal_uS8_sf"/>
</dbReference>
<dbReference type="NCBIfam" id="NF003115">
    <property type="entry name" value="PRK04034.1"/>
    <property type="match status" value="1"/>
</dbReference>
<dbReference type="PANTHER" id="PTHR11758">
    <property type="entry name" value="40S RIBOSOMAL PROTEIN S15A"/>
    <property type="match status" value="1"/>
</dbReference>
<dbReference type="Pfam" id="PF00410">
    <property type="entry name" value="Ribosomal_S8"/>
    <property type="match status" value="1"/>
</dbReference>
<dbReference type="SUPFAM" id="SSF56047">
    <property type="entry name" value="Ribosomal protein S8"/>
    <property type="match status" value="1"/>
</dbReference>
<dbReference type="PROSITE" id="PS00053">
    <property type="entry name" value="RIBOSOMAL_S8"/>
    <property type="match status" value="1"/>
</dbReference>
<comment type="function">
    <text evidence="1">One of the primary rRNA binding proteins, it binds directly to 16S rRNA central domain where it helps coordinate assembly of the platform of the 30S subunit.</text>
</comment>
<comment type="subunit">
    <text evidence="1">Part of the 30S ribosomal subunit.</text>
</comment>
<comment type="similarity">
    <text evidence="1">Belongs to the universal ribosomal protein uS8 family.</text>
</comment>
<name>RS8_METMA</name>
<sequence length="130" mass="14083">MVLLDPLANALSTIKNAEAIGKSSCIVRPASKNIGNVLKVMQDLGYIGDFEFIDDGKAGIYSVTLVGRINKCGAIKPRYSVGTGSFERWEKQFLPAKNFGALILTTSSGVMSQYEARDKKIGGQLLAYVY</sequence>
<keyword id="KW-0687">Ribonucleoprotein</keyword>
<keyword id="KW-0689">Ribosomal protein</keyword>
<keyword id="KW-0694">RNA-binding</keyword>
<keyword id="KW-0699">rRNA-binding</keyword>
<protein>
    <recommendedName>
        <fullName evidence="1">Small ribosomal subunit protein uS8</fullName>
    </recommendedName>
    <alternativeName>
        <fullName evidence="2">30S ribosomal protein S8</fullName>
    </alternativeName>
</protein>
<feature type="chain" id="PRO_0000126542" description="Small ribosomal subunit protein uS8">
    <location>
        <begin position="1"/>
        <end position="130"/>
    </location>
</feature>
<organism>
    <name type="scientific">Methanosarcina mazei (strain ATCC BAA-159 / DSM 3647 / Goe1 / Go1 / JCM 11833 / OCM 88)</name>
    <name type="common">Methanosarcina frisia</name>
    <dbReference type="NCBI Taxonomy" id="192952"/>
    <lineage>
        <taxon>Archaea</taxon>
        <taxon>Methanobacteriati</taxon>
        <taxon>Methanobacteriota</taxon>
        <taxon>Stenosarchaea group</taxon>
        <taxon>Methanomicrobia</taxon>
        <taxon>Methanosarcinales</taxon>
        <taxon>Methanosarcinaceae</taxon>
        <taxon>Methanosarcina</taxon>
    </lineage>
</organism>
<gene>
    <name evidence="1" type="primary">rps8</name>
    <name type="ordered locus">MM_2139</name>
</gene>
<accession>Q8PV35</accession>